<reference key="1">
    <citation type="journal article" date="2009" name="BMC Genomics">
        <title>Metabolic analysis of the soil microbe Dechloromonas aromatica str. RCB: indications of a surprisingly complex life-style and cryptic anaerobic pathways for aromatic degradation.</title>
        <authorList>
            <person name="Salinero K.K."/>
            <person name="Keller K."/>
            <person name="Feil W.S."/>
            <person name="Feil H."/>
            <person name="Trong S."/>
            <person name="Di Bartolo G."/>
            <person name="Lapidus A."/>
        </authorList>
    </citation>
    <scope>NUCLEOTIDE SEQUENCE [LARGE SCALE GENOMIC DNA]</scope>
    <source>
        <strain>RCB</strain>
    </source>
</reference>
<gene>
    <name evidence="1" type="primary">tsf</name>
    <name type="ordered locus">Daro_1743</name>
</gene>
<name>EFTS_DECAR</name>
<feature type="chain" id="PRO_0000241477" description="Elongation factor Ts">
    <location>
        <begin position="1"/>
        <end position="299"/>
    </location>
</feature>
<feature type="region of interest" description="Involved in Mg(2+) ion dislocation from EF-Tu" evidence="1">
    <location>
        <begin position="82"/>
        <end position="85"/>
    </location>
</feature>
<organism>
    <name type="scientific">Dechloromonas aromatica (strain RCB)</name>
    <dbReference type="NCBI Taxonomy" id="159087"/>
    <lineage>
        <taxon>Bacteria</taxon>
        <taxon>Pseudomonadati</taxon>
        <taxon>Pseudomonadota</taxon>
        <taxon>Betaproteobacteria</taxon>
        <taxon>Rhodocyclales</taxon>
        <taxon>Azonexaceae</taxon>
        <taxon>Dechloromonas</taxon>
    </lineage>
</organism>
<dbReference type="EMBL" id="CP000089">
    <property type="protein sequence ID" value="AAZ46490.1"/>
    <property type="molecule type" value="Genomic_DNA"/>
</dbReference>
<dbReference type="SMR" id="Q47F91"/>
<dbReference type="STRING" id="159087.Daro_1743"/>
<dbReference type="KEGG" id="dar:Daro_1743"/>
<dbReference type="eggNOG" id="COG0264">
    <property type="taxonomic scope" value="Bacteria"/>
</dbReference>
<dbReference type="HOGENOM" id="CLU_047155_0_2_4"/>
<dbReference type="OrthoDB" id="9808348at2"/>
<dbReference type="GO" id="GO:0005737">
    <property type="term" value="C:cytoplasm"/>
    <property type="evidence" value="ECO:0007669"/>
    <property type="project" value="UniProtKB-SubCell"/>
</dbReference>
<dbReference type="GO" id="GO:0003746">
    <property type="term" value="F:translation elongation factor activity"/>
    <property type="evidence" value="ECO:0007669"/>
    <property type="project" value="UniProtKB-UniRule"/>
</dbReference>
<dbReference type="CDD" id="cd14275">
    <property type="entry name" value="UBA_EF-Ts"/>
    <property type="match status" value="1"/>
</dbReference>
<dbReference type="FunFam" id="1.10.286.20:FF:000001">
    <property type="entry name" value="Elongation factor Ts"/>
    <property type="match status" value="1"/>
</dbReference>
<dbReference type="FunFam" id="1.10.8.10:FF:000001">
    <property type="entry name" value="Elongation factor Ts"/>
    <property type="match status" value="1"/>
</dbReference>
<dbReference type="Gene3D" id="1.10.286.20">
    <property type="match status" value="1"/>
</dbReference>
<dbReference type="Gene3D" id="1.10.8.10">
    <property type="entry name" value="DNA helicase RuvA subunit, C-terminal domain"/>
    <property type="match status" value="1"/>
</dbReference>
<dbReference type="Gene3D" id="3.30.479.20">
    <property type="entry name" value="Elongation factor Ts, dimerisation domain"/>
    <property type="match status" value="2"/>
</dbReference>
<dbReference type="HAMAP" id="MF_00050">
    <property type="entry name" value="EF_Ts"/>
    <property type="match status" value="1"/>
</dbReference>
<dbReference type="InterPro" id="IPR036402">
    <property type="entry name" value="EF-Ts_dimer_sf"/>
</dbReference>
<dbReference type="InterPro" id="IPR001816">
    <property type="entry name" value="Transl_elong_EFTs/EF1B"/>
</dbReference>
<dbReference type="InterPro" id="IPR014039">
    <property type="entry name" value="Transl_elong_EFTs/EF1B_dimer"/>
</dbReference>
<dbReference type="InterPro" id="IPR018101">
    <property type="entry name" value="Transl_elong_Ts_CS"/>
</dbReference>
<dbReference type="InterPro" id="IPR009060">
    <property type="entry name" value="UBA-like_sf"/>
</dbReference>
<dbReference type="NCBIfam" id="TIGR00116">
    <property type="entry name" value="tsf"/>
    <property type="match status" value="1"/>
</dbReference>
<dbReference type="PANTHER" id="PTHR11741">
    <property type="entry name" value="ELONGATION FACTOR TS"/>
    <property type="match status" value="1"/>
</dbReference>
<dbReference type="PANTHER" id="PTHR11741:SF0">
    <property type="entry name" value="ELONGATION FACTOR TS, MITOCHONDRIAL"/>
    <property type="match status" value="1"/>
</dbReference>
<dbReference type="Pfam" id="PF00889">
    <property type="entry name" value="EF_TS"/>
    <property type="match status" value="1"/>
</dbReference>
<dbReference type="SUPFAM" id="SSF54713">
    <property type="entry name" value="Elongation factor Ts (EF-Ts), dimerisation domain"/>
    <property type="match status" value="2"/>
</dbReference>
<dbReference type="SUPFAM" id="SSF46934">
    <property type="entry name" value="UBA-like"/>
    <property type="match status" value="1"/>
</dbReference>
<dbReference type="PROSITE" id="PS01127">
    <property type="entry name" value="EF_TS_2"/>
    <property type="match status" value="1"/>
</dbReference>
<comment type="function">
    <text evidence="1">Associates with the EF-Tu.GDP complex and induces the exchange of GDP to GTP. It remains bound to the aminoacyl-tRNA.EF-Tu.GTP complex up to the GTP hydrolysis stage on the ribosome.</text>
</comment>
<comment type="subcellular location">
    <subcellularLocation>
        <location evidence="1">Cytoplasm</location>
    </subcellularLocation>
</comment>
<comment type="similarity">
    <text evidence="1">Belongs to the EF-Ts family.</text>
</comment>
<proteinExistence type="inferred from homology"/>
<keyword id="KW-0963">Cytoplasm</keyword>
<keyword id="KW-0251">Elongation factor</keyword>
<keyword id="KW-0648">Protein biosynthesis</keyword>
<sequence length="299" mass="31158">MAAITAGMVAELRGKTDAPMMECKKALTEADGDMAKAEEILRVKLGNKASKAAVRIAAEGIVAVSISADGKLGSIIEVNSETDFVAKNDEFIALSNGCAALVANQNPADVAALSALPMGEGTVESTRSALVGKIGENMTIRRFVRFEAKGKLVSYIHGGAKVGVVVDLVGGDEQLGKDLAMHIAASKPKSLDSTGVPAELLETERRVAIEKAREAGKPEAMLEKIAEGTVQKYLKDVTLLGQVFVKAADGKQTIEQLLKEKGASVAGFTLYMVGEGIEKKVDDFAAEVAAQAAAAAAKK</sequence>
<accession>Q47F91</accession>
<protein>
    <recommendedName>
        <fullName evidence="1">Elongation factor Ts</fullName>
        <shortName evidence="1">EF-Ts</shortName>
    </recommendedName>
</protein>
<evidence type="ECO:0000255" key="1">
    <source>
        <dbReference type="HAMAP-Rule" id="MF_00050"/>
    </source>
</evidence>